<comment type="function">
    <text evidence="1">Synthesizes alpha-1,4-glucan chains using ADP-glucose.</text>
</comment>
<comment type="catalytic activity">
    <reaction evidence="1">
        <text>[(1-&gt;4)-alpha-D-glucosyl](n) + ADP-alpha-D-glucose = [(1-&gt;4)-alpha-D-glucosyl](n+1) + ADP + H(+)</text>
        <dbReference type="Rhea" id="RHEA:18189"/>
        <dbReference type="Rhea" id="RHEA-COMP:9584"/>
        <dbReference type="Rhea" id="RHEA-COMP:9587"/>
        <dbReference type="ChEBI" id="CHEBI:15378"/>
        <dbReference type="ChEBI" id="CHEBI:15444"/>
        <dbReference type="ChEBI" id="CHEBI:57498"/>
        <dbReference type="ChEBI" id="CHEBI:456216"/>
        <dbReference type="EC" id="2.4.1.21"/>
    </reaction>
</comment>
<comment type="pathway">
    <text evidence="1">Glycan biosynthesis; glycogen biosynthesis.</text>
</comment>
<comment type="similarity">
    <text evidence="1">Belongs to the glycosyltransferase 1 family. Bacterial/plant glycogen synthase subfamily.</text>
</comment>
<comment type="sequence caution" evidence="2">
    <conflict type="erroneous initiation">
        <sequence resource="EMBL-CDS" id="CAJ22082"/>
    </conflict>
</comment>
<proteinExistence type="inferred from homology"/>
<accession>Q3BYI1</accession>
<gene>
    <name evidence="1" type="primary">glgA</name>
    <name type="ordered locus">XCV0451</name>
</gene>
<protein>
    <recommendedName>
        <fullName evidence="1">Glycogen synthase</fullName>
        <ecNumber evidence="1">2.4.1.21</ecNumber>
    </recommendedName>
    <alternativeName>
        <fullName evidence="1">Starch [bacterial glycogen] synthase</fullName>
    </alternativeName>
</protein>
<reference key="1">
    <citation type="journal article" date="2005" name="J. Bacteriol.">
        <title>Insights into genome plasticity and pathogenicity of the plant pathogenic Bacterium Xanthomonas campestris pv. vesicatoria revealed by the complete genome sequence.</title>
        <authorList>
            <person name="Thieme F."/>
            <person name="Koebnik R."/>
            <person name="Bekel T."/>
            <person name="Berger C."/>
            <person name="Boch J."/>
            <person name="Buettner D."/>
            <person name="Caldana C."/>
            <person name="Gaigalat L."/>
            <person name="Goesmann A."/>
            <person name="Kay S."/>
            <person name="Kirchner O."/>
            <person name="Lanz C."/>
            <person name="Linke B."/>
            <person name="McHardy A.C."/>
            <person name="Meyer F."/>
            <person name="Mittenhuber G."/>
            <person name="Nies D.H."/>
            <person name="Niesbach-Kloesgen U."/>
            <person name="Patschkowski T."/>
            <person name="Rueckert C."/>
            <person name="Rupp O."/>
            <person name="Schneiker S."/>
            <person name="Schuster S.C."/>
            <person name="Vorhoelter F.J."/>
            <person name="Weber E."/>
            <person name="Puehler A."/>
            <person name="Bonas U."/>
            <person name="Bartels D."/>
            <person name="Kaiser O."/>
        </authorList>
    </citation>
    <scope>NUCLEOTIDE SEQUENCE [LARGE SCALE GENOMIC DNA]</scope>
    <source>
        <strain>85-10</strain>
    </source>
</reference>
<keyword id="KW-0320">Glycogen biosynthesis</keyword>
<keyword id="KW-0328">Glycosyltransferase</keyword>
<keyword id="KW-0808">Transferase</keyword>
<organism>
    <name type="scientific">Xanthomonas euvesicatoria pv. vesicatoria (strain 85-10)</name>
    <name type="common">Xanthomonas campestris pv. vesicatoria</name>
    <dbReference type="NCBI Taxonomy" id="316273"/>
    <lineage>
        <taxon>Bacteria</taxon>
        <taxon>Pseudomonadati</taxon>
        <taxon>Pseudomonadota</taxon>
        <taxon>Gammaproteobacteria</taxon>
        <taxon>Lysobacterales</taxon>
        <taxon>Lysobacteraceae</taxon>
        <taxon>Xanthomonas</taxon>
    </lineage>
</organism>
<dbReference type="EC" id="2.4.1.21" evidence="1"/>
<dbReference type="EMBL" id="AM039952">
    <property type="protein sequence ID" value="CAJ22082.1"/>
    <property type="status" value="ALT_INIT"/>
    <property type="molecule type" value="Genomic_DNA"/>
</dbReference>
<dbReference type="SMR" id="Q3BYI1"/>
<dbReference type="STRING" id="456327.BJD11_20615"/>
<dbReference type="CAZy" id="GT5">
    <property type="family name" value="Glycosyltransferase Family 5"/>
</dbReference>
<dbReference type="KEGG" id="xcv:XCV0451"/>
<dbReference type="eggNOG" id="COG0297">
    <property type="taxonomic scope" value="Bacteria"/>
</dbReference>
<dbReference type="HOGENOM" id="CLU_009583_18_4_6"/>
<dbReference type="UniPathway" id="UPA00164"/>
<dbReference type="Proteomes" id="UP000007069">
    <property type="component" value="Chromosome"/>
</dbReference>
<dbReference type="GO" id="GO:0009011">
    <property type="term" value="F:alpha-1,4-glucan glucosyltransferase (ADP-glucose donor) activity"/>
    <property type="evidence" value="ECO:0007669"/>
    <property type="project" value="UniProtKB-UniRule"/>
</dbReference>
<dbReference type="GO" id="GO:0004373">
    <property type="term" value="F:alpha-1,4-glucan glucosyltransferase (UDP-glucose donor) activity"/>
    <property type="evidence" value="ECO:0007669"/>
    <property type="project" value="InterPro"/>
</dbReference>
<dbReference type="GO" id="GO:0005978">
    <property type="term" value="P:glycogen biosynthetic process"/>
    <property type="evidence" value="ECO:0007669"/>
    <property type="project" value="UniProtKB-UniRule"/>
</dbReference>
<dbReference type="CDD" id="cd03791">
    <property type="entry name" value="GT5_Glycogen_synthase_DULL1-like"/>
    <property type="match status" value="1"/>
</dbReference>
<dbReference type="Gene3D" id="3.40.50.2000">
    <property type="entry name" value="Glycogen Phosphorylase B"/>
    <property type="match status" value="2"/>
</dbReference>
<dbReference type="HAMAP" id="MF_00484">
    <property type="entry name" value="Glycogen_synth"/>
    <property type="match status" value="1"/>
</dbReference>
<dbReference type="InterPro" id="IPR001296">
    <property type="entry name" value="Glyco_trans_1"/>
</dbReference>
<dbReference type="InterPro" id="IPR011835">
    <property type="entry name" value="GS/SS"/>
</dbReference>
<dbReference type="InterPro" id="IPR013534">
    <property type="entry name" value="Starch_synth_cat_dom"/>
</dbReference>
<dbReference type="NCBIfam" id="TIGR02095">
    <property type="entry name" value="glgA"/>
    <property type="match status" value="1"/>
</dbReference>
<dbReference type="NCBIfam" id="NF001899">
    <property type="entry name" value="PRK00654.1-2"/>
    <property type="match status" value="1"/>
</dbReference>
<dbReference type="NCBIfam" id="NF001901">
    <property type="entry name" value="PRK00654.1-5"/>
    <property type="match status" value="1"/>
</dbReference>
<dbReference type="PANTHER" id="PTHR45825:SF8">
    <property type="entry name" value="GLYCOGEN SYNTHASE"/>
    <property type="match status" value="1"/>
</dbReference>
<dbReference type="PANTHER" id="PTHR45825">
    <property type="entry name" value="GRANULE-BOUND STARCH SYNTHASE 1, CHLOROPLASTIC/AMYLOPLASTIC"/>
    <property type="match status" value="1"/>
</dbReference>
<dbReference type="Pfam" id="PF08323">
    <property type="entry name" value="Glyco_transf_5"/>
    <property type="match status" value="1"/>
</dbReference>
<dbReference type="Pfam" id="PF00534">
    <property type="entry name" value="Glycos_transf_1"/>
    <property type="match status" value="1"/>
</dbReference>
<dbReference type="SUPFAM" id="SSF53756">
    <property type="entry name" value="UDP-Glycosyltransferase/glycogen phosphorylase"/>
    <property type="match status" value="1"/>
</dbReference>
<sequence length="509" mass="54851">MLPTLKKSGRPRDARGRFIRHHERLPVSLADTRGALFVASEMADFIKAGGLGDVAAALPRALRHRYDVRVLIPGYRAVLERAGKVEIVGRVLAHAALPACDIGRIVQSDGLPIYILLSKELFERDGSPYVSTSGSEFEDNAIRFATLSHAAAQIAAGHAGLGWKPRLLHLNDWPCALAAGYVRWSGGTTPCLLTIHNLAYQGLVPYSMAAALGIPAERVAELEFYGQMSFLRGGIVNADHVNTVSVSYAKQITGPAQGCGLDRLLAGRAAKGALTGIVNGIDASWDPRTDEYLDSHFSVNQWQGRQANAAQVRKAFGLRESTGPLFAVVSRLVHQKGLDLICEVAPQIVAAGGQIAVIGGGEPEIERQVAELTRRYPGQVGAFIGFEEGLARRMFAGADFLLMPSRFEPCGLSQMYAQRFGCLPIAHATGGLIDTVDDGVTGFLFQHASVEALRRCLERAFRTFRLPSLLSAMRRAAMLRPSGWDVAGKKYLSLYEHTAATAPALATVS</sequence>
<evidence type="ECO:0000255" key="1">
    <source>
        <dbReference type="HAMAP-Rule" id="MF_00484"/>
    </source>
</evidence>
<evidence type="ECO:0000305" key="2"/>
<name>GLGA_XANE5</name>
<feature type="chain" id="PRO_0000230273" description="Glycogen synthase">
    <location>
        <begin position="1"/>
        <end position="509"/>
    </location>
</feature>
<feature type="binding site" evidence="1">
    <location>
        <position position="47"/>
    </location>
    <ligand>
        <name>ADP-alpha-D-glucose</name>
        <dbReference type="ChEBI" id="CHEBI:57498"/>
    </ligand>
</feature>